<feature type="chain" id="PRO_0000380092" description="Putative O-methyltransferase MAB_1361c">
    <location>
        <begin position="1"/>
        <end position="215"/>
    </location>
</feature>
<feature type="binding site" evidence="2">
    <location>
        <position position="42"/>
    </location>
    <ligand>
        <name>S-adenosyl-L-methionine</name>
        <dbReference type="ChEBI" id="CHEBI:59789"/>
    </ligand>
</feature>
<feature type="binding site" evidence="2">
    <location>
        <position position="64"/>
    </location>
    <ligand>
        <name>S-adenosyl-L-methionine</name>
        <dbReference type="ChEBI" id="CHEBI:59789"/>
    </ligand>
</feature>
<feature type="binding site" evidence="2">
    <location>
        <begin position="66"/>
        <end position="67"/>
    </location>
    <ligand>
        <name>S-adenosyl-L-methionine</name>
        <dbReference type="ChEBI" id="CHEBI:59789"/>
    </ligand>
</feature>
<feature type="binding site" evidence="2">
    <location>
        <position position="72"/>
    </location>
    <ligand>
        <name>S-adenosyl-L-methionine</name>
        <dbReference type="ChEBI" id="CHEBI:59789"/>
    </ligand>
</feature>
<feature type="binding site" evidence="2">
    <location>
        <position position="90"/>
    </location>
    <ligand>
        <name>S-adenosyl-L-methionine</name>
        <dbReference type="ChEBI" id="CHEBI:59789"/>
    </ligand>
</feature>
<feature type="binding site" evidence="2">
    <location>
        <position position="91"/>
    </location>
    <ligand>
        <name>S-adenosyl-L-methionine</name>
        <dbReference type="ChEBI" id="CHEBI:59789"/>
    </ligand>
</feature>
<feature type="binding site" evidence="1">
    <location>
        <position position="138"/>
    </location>
    <ligand>
        <name>substrate</name>
    </ligand>
</feature>
<dbReference type="EC" id="2.1.1.-"/>
<dbReference type="EMBL" id="CU458896">
    <property type="protein sequence ID" value="CAM61447.1"/>
    <property type="molecule type" value="Genomic_DNA"/>
</dbReference>
<dbReference type="SMR" id="B1MLM0"/>
<dbReference type="KEGG" id="mab:MAB_1361c"/>
<dbReference type="Proteomes" id="UP000007137">
    <property type="component" value="Chromosome"/>
</dbReference>
<dbReference type="GO" id="GO:0008171">
    <property type="term" value="F:O-methyltransferase activity"/>
    <property type="evidence" value="ECO:0007669"/>
    <property type="project" value="InterPro"/>
</dbReference>
<dbReference type="GO" id="GO:0008757">
    <property type="term" value="F:S-adenosylmethionine-dependent methyltransferase activity"/>
    <property type="evidence" value="ECO:0007669"/>
    <property type="project" value="TreeGrafter"/>
</dbReference>
<dbReference type="GO" id="GO:0032259">
    <property type="term" value="P:methylation"/>
    <property type="evidence" value="ECO:0007669"/>
    <property type="project" value="UniProtKB-KW"/>
</dbReference>
<dbReference type="CDD" id="cd02440">
    <property type="entry name" value="AdoMet_MTases"/>
    <property type="match status" value="1"/>
</dbReference>
<dbReference type="Gene3D" id="3.40.50.150">
    <property type="entry name" value="Vaccinia Virus protein VP39"/>
    <property type="match status" value="1"/>
</dbReference>
<dbReference type="InterPro" id="IPR050362">
    <property type="entry name" value="Cation-dep_OMT"/>
</dbReference>
<dbReference type="InterPro" id="IPR029063">
    <property type="entry name" value="SAM-dependent_MTases_sf"/>
</dbReference>
<dbReference type="InterPro" id="IPR002935">
    <property type="entry name" value="SAM_O-MeTrfase"/>
</dbReference>
<dbReference type="PANTHER" id="PTHR10509:SF85">
    <property type="entry name" value="O-METHYLTRANSFERASE RV1220C-RELATED"/>
    <property type="match status" value="1"/>
</dbReference>
<dbReference type="PANTHER" id="PTHR10509">
    <property type="entry name" value="O-METHYLTRANSFERASE-RELATED"/>
    <property type="match status" value="1"/>
</dbReference>
<dbReference type="Pfam" id="PF01596">
    <property type="entry name" value="Methyltransf_3"/>
    <property type="match status" value="1"/>
</dbReference>
<dbReference type="SUPFAM" id="SSF53335">
    <property type="entry name" value="S-adenosyl-L-methionine-dependent methyltransferases"/>
    <property type="match status" value="1"/>
</dbReference>
<dbReference type="PROSITE" id="PS51682">
    <property type="entry name" value="SAM_OMT_I"/>
    <property type="match status" value="1"/>
</dbReference>
<comment type="similarity">
    <text evidence="2">Belongs to the class I-like SAM-binding methyltransferase superfamily. Cation-dependent O-methyltransferase family.</text>
</comment>
<accession>B1MLM0</accession>
<gene>
    <name type="ordered locus">MAB_1361c</name>
</gene>
<proteinExistence type="inferred from homology"/>
<organism>
    <name type="scientific">Mycobacteroides abscessus (strain ATCC 19977 / DSM 44196 / CCUG 20993 / CIP 104536 / JCM 13569 / NCTC 13031 / TMC 1543 / L948)</name>
    <name type="common">Mycobacterium abscessus</name>
    <dbReference type="NCBI Taxonomy" id="561007"/>
    <lineage>
        <taxon>Bacteria</taxon>
        <taxon>Bacillati</taxon>
        <taxon>Actinomycetota</taxon>
        <taxon>Actinomycetes</taxon>
        <taxon>Mycobacteriales</taxon>
        <taxon>Mycobacteriaceae</taxon>
        <taxon>Mycobacteroides</taxon>
        <taxon>Mycobacteroides abscessus</taxon>
    </lineage>
</organism>
<name>Y1361_MYCA9</name>
<reference key="1">
    <citation type="journal article" date="2009" name="PLoS ONE">
        <title>Non mycobacterial virulence genes in the genome of the emerging pathogen Mycobacterium abscessus.</title>
        <authorList>
            <person name="Ripoll F."/>
            <person name="Pasek S."/>
            <person name="Schenowitz C."/>
            <person name="Dossat C."/>
            <person name="Barbe V."/>
            <person name="Rottman M."/>
            <person name="Macheras E."/>
            <person name="Heym B."/>
            <person name="Herrmann J.L."/>
            <person name="Daffe M."/>
            <person name="Brosch R."/>
            <person name="Risler J.L."/>
            <person name="Gaillard J.L."/>
        </authorList>
    </citation>
    <scope>NUCLEOTIDE SEQUENCE [LARGE SCALE GENOMIC DNA]</scope>
    <source>
        <strain>ATCC 19977 / DSM 44196 / CCUG 20993 / CIP 104536 / JCM 13569 / NCTC 13031 / TMC 1543 / L948</strain>
    </source>
</reference>
<protein>
    <recommendedName>
        <fullName>Putative O-methyltransferase MAB_1361c</fullName>
        <ecNumber>2.1.1.-</ecNumber>
    </recommendedName>
</protein>
<keyword id="KW-0489">Methyltransferase</keyword>
<keyword id="KW-1185">Reference proteome</keyword>
<keyword id="KW-0949">S-adenosyl-L-methionine</keyword>
<keyword id="KW-0808">Transferase</keyword>
<evidence type="ECO:0000250" key="1"/>
<evidence type="ECO:0000255" key="2">
    <source>
        <dbReference type="PROSITE-ProRule" id="PRU01019"/>
    </source>
</evidence>
<sequence length="215" mass="21849">MTSSADRSPVEAMVSHAEGAISEDDIVAAARERAVDLGAGPVTPAVGALLSVFARLSGGKAVVEVGTGAGVSGLWLLSGMREDGVLTTIDVEPEHQRSAKQAFSEASIAPSRTRLIGGRAQEVLPRLADESYDLLVIDAAPADQPDFLAGGIRLLRPGGAVVIHGASAGGRAGDPSANDPDVVGVREAARIIADDGRFTAVLIPLGDGLLAATRD</sequence>